<protein>
    <recommendedName>
        <fullName>Probable proline-specific permease put4</fullName>
    </recommendedName>
</protein>
<proteinExistence type="inferred from homology"/>
<evidence type="ECO:0000250" key="1">
    <source>
        <dbReference type="UniProtKB" id="P15380"/>
    </source>
</evidence>
<evidence type="ECO:0000255" key="2"/>
<evidence type="ECO:0000269" key="3">
    <source>
    </source>
</evidence>
<evidence type="ECO:0000305" key="4"/>
<evidence type="ECO:0000312" key="5">
    <source>
        <dbReference type="EMBL" id="CAB60020.1"/>
    </source>
</evidence>
<sequence>MDEKKALQYEESKRAEEITDIELVSVGGIDVEKKYGETKRALKSRHVQLIAIGGCIGTGLFVGSGSALSESGPASLFLSYVIMSFVIWTVMNALGEMCTYLPLSGASPITYIERYVDASLAFAAGWNYWYAYVFLVASEVTAASIVIEYWTYAVPTAGWIAILLFLVAVLNSFFVKWFGETEFWFAIIKVIAIVGLIILGVVIFFGGTPKHDRLGFRYWKHGLAFREYIVKGASGRFVGFWSAVIKSGFAFILAPELVIFSAGETEAPRRNIPKATSRFIYRLIFFYIFGSLTIGVITSSKDPRLLNAISSGASGAAASPFVIGIQNAEIPVLNHIINAVILTSACSSGNSFLFAGSRSIYSLAKEHQAPKIFKYCNRWGVPVISVAVTVLFACLAFLNASASAAVVFNWFCNLSTISGFLAWICVLVAYLQFRKAMILNNLWETRPYKTPFQPYATYLTLFLLALITLTNGFTVFVGHTFTAGNFIAAYITLPIFLVLYVAHKLWSRNWSFGKRIEEIDVTTGVAEAEALEQMYPAPVPRNIIEKIWFWIA</sequence>
<keyword id="KW-0029">Amino-acid transport</keyword>
<keyword id="KW-0256">Endoplasmic reticulum</keyword>
<keyword id="KW-0333">Golgi apparatus</keyword>
<keyword id="KW-0472">Membrane</keyword>
<keyword id="KW-1185">Reference proteome</keyword>
<keyword id="KW-0812">Transmembrane</keyword>
<keyword id="KW-1133">Transmembrane helix</keyword>
<keyword id="KW-0813">Transport</keyword>
<feature type="chain" id="PRO_0000310854" description="Probable proline-specific permease put4">
    <location>
        <begin position="1"/>
        <end position="552"/>
    </location>
</feature>
<feature type="topological domain" description="Cytoplasmic" evidence="2">
    <location>
        <begin position="1"/>
        <end position="48"/>
    </location>
</feature>
<feature type="transmembrane region" description="Helical" evidence="2">
    <location>
        <begin position="49"/>
        <end position="69"/>
    </location>
</feature>
<feature type="topological domain" description="Extracellular" evidence="2">
    <location>
        <begin position="70"/>
        <end position="73"/>
    </location>
</feature>
<feature type="transmembrane region" description="Helical" evidence="2">
    <location>
        <begin position="74"/>
        <end position="94"/>
    </location>
</feature>
<feature type="topological domain" description="Cytoplasmic" evidence="2">
    <location>
        <begin position="95"/>
        <end position="117"/>
    </location>
</feature>
<feature type="transmembrane region" description="Helical" evidence="2">
    <location>
        <begin position="118"/>
        <end position="138"/>
    </location>
</feature>
<feature type="topological domain" description="Extracellular" evidence="2">
    <location>
        <begin position="139"/>
        <end position="149"/>
    </location>
</feature>
<feature type="transmembrane region" description="Helical" evidence="2">
    <location>
        <begin position="150"/>
        <end position="170"/>
    </location>
</feature>
<feature type="topological domain" description="Cytoplasmic" evidence="2">
    <location>
        <begin position="171"/>
        <end position="184"/>
    </location>
</feature>
<feature type="transmembrane region" description="Helical" evidence="2">
    <location>
        <begin position="185"/>
        <end position="205"/>
    </location>
</feature>
<feature type="topological domain" description="Extracellular" evidence="2">
    <location>
        <begin position="206"/>
        <end position="239"/>
    </location>
</feature>
<feature type="transmembrane region" description="Helical" evidence="2">
    <location>
        <begin position="240"/>
        <end position="260"/>
    </location>
</feature>
<feature type="topological domain" description="Cytoplasmic" evidence="2">
    <location>
        <begin position="261"/>
        <end position="278"/>
    </location>
</feature>
<feature type="transmembrane region" description="Helical" evidence="2">
    <location>
        <begin position="279"/>
        <end position="299"/>
    </location>
</feature>
<feature type="topological domain" description="Extracellular" evidence="2">
    <location>
        <begin position="300"/>
        <end position="335"/>
    </location>
</feature>
<feature type="transmembrane region" description="Helical" evidence="2">
    <location>
        <begin position="336"/>
        <end position="356"/>
    </location>
</feature>
<feature type="topological domain" description="Cytoplasmic" evidence="2">
    <location>
        <begin position="357"/>
        <end position="378"/>
    </location>
</feature>
<feature type="transmembrane region" description="Helical" evidence="2">
    <location>
        <begin position="379"/>
        <end position="399"/>
    </location>
</feature>
<feature type="topological domain" description="Extracellular" evidence="2">
    <location>
        <begin position="400"/>
        <end position="410"/>
    </location>
</feature>
<feature type="transmembrane region" description="Helical" evidence="2">
    <location>
        <begin position="411"/>
        <end position="431"/>
    </location>
</feature>
<feature type="topological domain" description="Cytoplasmic" evidence="2">
    <location>
        <begin position="432"/>
        <end position="457"/>
    </location>
</feature>
<feature type="transmembrane region" description="Helical" evidence="2">
    <location>
        <begin position="458"/>
        <end position="478"/>
    </location>
</feature>
<feature type="topological domain" description="Extracellular" evidence="2">
    <location>
        <begin position="479"/>
        <end position="480"/>
    </location>
</feature>
<feature type="transmembrane region" description="Helical" evidence="2">
    <location>
        <begin position="481"/>
        <end position="501"/>
    </location>
</feature>
<feature type="topological domain" description="Cytoplasmic" evidence="2">
    <location>
        <begin position="502"/>
        <end position="552"/>
    </location>
</feature>
<organism>
    <name type="scientific">Schizosaccharomyces pombe (strain 972 / ATCC 24843)</name>
    <name type="common">Fission yeast</name>
    <dbReference type="NCBI Taxonomy" id="284812"/>
    <lineage>
        <taxon>Eukaryota</taxon>
        <taxon>Fungi</taxon>
        <taxon>Dikarya</taxon>
        <taxon>Ascomycota</taxon>
        <taxon>Taphrinomycotina</taxon>
        <taxon>Schizosaccharomycetes</taxon>
        <taxon>Schizosaccharomycetales</taxon>
        <taxon>Schizosaccharomycetaceae</taxon>
        <taxon>Schizosaccharomyces</taxon>
    </lineage>
</organism>
<gene>
    <name evidence="1" type="primary">put4</name>
    <name type="ORF">SPAC869.10c</name>
</gene>
<reference evidence="5" key="1">
    <citation type="journal article" date="2002" name="Nature">
        <title>The genome sequence of Schizosaccharomyces pombe.</title>
        <authorList>
            <person name="Wood V."/>
            <person name="Gwilliam R."/>
            <person name="Rajandream M.A."/>
            <person name="Lyne M.H."/>
            <person name="Lyne R."/>
            <person name="Stewart A."/>
            <person name="Sgouros J.G."/>
            <person name="Peat N."/>
            <person name="Hayles J."/>
            <person name="Baker S.G."/>
            <person name="Basham D."/>
            <person name="Bowman S."/>
            <person name="Brooks K."/>
            <person name="Brown D."/>
            <person name="Brown S."/>
            <person name="Chillingworth T."/>
            <person name="Churcher C.M."/>
            <person name="Collins M."/>
            <person name="Connor R."/>
            <person name="Cronin A."/>
            <person name="Davis P."/>
            <person name="Feltwell T."/>
            <person name="Fraser A."/>
            <person name="Gentles S."/>
            <person name="Goble A."/>
            <person name="Hamlin N."/>
            <person name="Harris D.E."/>
            <person name="Hidalgo J."/>
            <person name="Hodgson G."/>
            <person name="Holroyd S."/>
            <person name="Hornsby T."/>
            <person name="Howarth S."/>
            <person name="Huckle E.J."/>
            <person name="Hunt S."/>
            <person name="Jagels K."/>
            <person name="James K.D."/>
            <person name="Jones L."/>
            <person name="Jones M."/>
            <person name="Leather S."/>
            <person name="McDonald S."/>
            <person name="McLean J."/>
            <person name="Mooney P."/>
            <person name="Moule S."/>
            <person name="Mungall K.L."/>
            <person name="Murphy L.D."/>
            <person name="Niblett D."/>
            <person name="Odell C."/>
            <person name="Oliver K."/>
            <person name="O'Neil S."/>
            <person name="Pearson D."/>
            <person name="Quail M.A."/>
            <person name="Rabbinowitsch E."/>
            <person name="Rutherford K.M."/>
            <person name="Rutter S."/>
            <person name="Saunders D."/>
            <person name="Seeger K."/>
            <person name="Sharp S."/>
            <person name="Skelton J."/>
            <person name="Simmonds M.N."/>
            <person name="Squares R."/>
            <person name="Squares S."/>
            <person name="Stevens K."/>
            <person name="Taylor K."/>
            <person name="Taylor R.G."/>
            <person name="Tivey A."/>
            <person name="Walsh S.V."/>
            <person name="Warren T."/>
            <person name="Whitehead S."/>
            <person name="Woodward J.R."/>
            <person name="Volckaert G."/>
            <person name="Aert R."/>
            <person name="Robben J."/>
            <person name="Grymonprez B."/>
            <person name="Weltjens I."/>
            <person name="Vanstreels E."/>
            <person name="Rieger M."/>
            <person name="Schaefer M."/>
            <person name="Mueller-Auer S."/>
            <person name="Gabel C."/>
            <person name="Fuchs M."/>
            <person name="Duesterhoeft A."/>
            <person name="Fritzc C."/>
            <person name="Holzer E."/>
            <person name="Moestl D."/>
            <person name="Hilbert H."/>
            <person name="Borzym K."/>
            <person name="Langer I."/>
            <person name="Beck A."/>
            <person name="Lehrach H."/>
            <person name="Reinhardt R."/>
            <person name="Pohl T.M."/>
            <person name="Eger P."/>
            <person name="Zimmermann W."/>
            <person name="Wedler H."/>
            <person name="Wambutt R."/>
            <person name="Purnelle B."/>
            <person name="Goffeau A."/>
            <person name="Cadieu E."/>
            <person name="Dreano S."/>
            <person name="Gloux S."/>
            <person name="Lelaure V."/>
            <person name="Mottier S."/>
            <person name="Galibert F."/>
            <person name="Aves S.J."/>
            <person name="Xiang Z."/>
            <person name="Hunt C."/>
            <person name="Moore K."/>
            <person name="Hurst S.M."/>
            <person name="Lucas M."/>
            <person name="Rochet M."/>
            <person name="Gaillardin C."/>
            <person name="Tallada V.A."/>
            <person name="Garzon A."/>
            <person name="Thode G."/>
            <person name="Daga R.R."/>
            <person name="Cruzado L."/>
            <person name="Jimenez J."/>
            <person name="Sanchez M."/>
            <person name="del Rey F."/>
            <person name="Benito J."/>
            <person name="Dominguez A."/>
            <person name="Revuelta J.L."/>
            <person name="Moreno S."/>
            <person name="Armstrong J."/>
            <person name="Forsburg S.L."/>
            <person name="Cerutti L."/>
            <person name="Lowe T."/>
            <person name="McCombie W.R."/>
            <person name="Paulsen I."/>
            <person name="Potashkin J."/>
            <person name="Shpakovski G.V."/>
            <person name="Ussery D."/>
            <person name="Barrell B.G."/>
            <person name="Nurse P."/>
        </authorList>
    </citation>
    <scope>NUCLEOTIDE SEQUENCE [LARGE SCALE GENOMIC DNA]</scope>
    <source>
        <strain>972 / ATCC 24843</strain>
    </source>
</reference>
<reference evidence="4" key="2">
    <citation type="journal article" date="2006" name="Nat. Biotechnol.">
        <title>ORFeome cloning and global analysis of protein localization in the fission yeast Schizosaccharomyces pombe.</title>
        <authorList>
            <person name="Matsuyama A."/>
            <person name="Arai R."/>
            <person name="Yashiroda Y."/>
            <person name="Shirai A."/>
            <person name="Kamata A."/>
            <person name="Sekido S."/>
            <person name="Kobayashi Y."/>
            <person name="Hashimoto A."/>
            <person name="Hamamoto M."/>
            <person name="Hiraoka Y."/>
            <person name="Horinouchi S."/>
            <person name="Yoshida M."/>
        </authorList>
    </citation>
    <scope>SUBCELLULAR LOCATION [LARGE SCALE ANALYSIS]</scope>
</reference>
<dbReference type="EMBL" id="CU329670">
    <property type="protein sequence ID" value="CAB60020.1"/>
    <property type="molecule type" value="Genomic_DNA"/>
</dbReference>
<dbReference type="PIR" id="T39121">
    <property type="entry name" value="T39121"/>
</dbReference>
<dbReference type="RefSeq" id="NP_595009.1">
    <property type="nucleotide sequence ID" value="NM_001020440.2"/>
</dbReference>
<dbReference type="SMR" id="Q9URZ3"/>
<dbReference type="BioGRID" id="280093">
    <property type="interactions" value="2"/>
</dbReference>
<dbReference type="FunCoup" id="Q9URZ3">
    <property type="interactions" value="248"/>
</dbReference>
<dbReference type="STRING" id="284812.Q9URZ3"/>
<dbReference type="iPTMnet" id="Q9URZ3"/>
<dbReference type="PaxDb" id="4896-SPAC869.10c.1"/>
<dbReference type="EnsemblFungi" id="SPAC869.10c.1">
    <property type="protein sequence ID" value="SPAC869.10c.1:pep"/>
    <property type="gene ID" value="SPAC869.10c"/>
</dbReference>
<dbReference type="GeneID" id="2543679"/>
<dbReference type="KEGG" id="spo:2543679"/>
<dbReference type="PomBase" id="SPAC869.10c">
    <property type="gene designation" value="put4"/>
</dbReference>
<dbReference type="VEuPathDB" id="FungiDB:SPAC869.10c"/>
<dbReference type="eggNOG" id="KOG1286">
    <property type="taxonomic scope" value="Eukaryota"/>
</dbReference>
<dbReference type="HOGENOM" id="CLU_007946_12_1_1"/>
<dbReference type="InParanoid" id="Q9URZ3"/>
<dbReference type="OMA" id="SMFLLIW"/>
<dbReference type="PhylomeDB" id="Q9URZ3"/>
<dbReference type="PRO" id="PR:Q9URZ3"/>
<dbReference type="Proteomes" id="UP000002485">
    <property type="component" value="Chromosome I"/>
</dbReference>
<dbReference type="GO" id="GO:0005783">
    <property type="term" value="C:endoplasmic reticulum"/>
    <property type="evidence" value="ECO:0007669"/>
    <property type="project" value="UniProtKB-SubCell"/>
</dbReference>
<dbReference type="GO" id="GO:0005794">
    <property type="term" value="C:Golgi apparatus"/>
    <property type="evidence" value="ECO:0007669"/>
    <property type="project" value="UniProtKB-SubCell"/>
</dbReference>
<dbReference type="GO" id="GO:0016020">
    <property type="term" value="C:membrane"/>
    <property type="evidence" value="ECO:0000318"/>
    <property type="project" value="GO_Central"/>
</dbReference>
<dbReference type="GO" id="GO:0005886">
    <property type="term" value="C:plasma membrane"/>
    <property type="evidence" value="ECO:0000266"/>
    <property type="project" value="PomBase"/>
</dbReference>
<dbReference type="GO" id="GO:0015171">
    <property type="term" value="F:amino acid transmembrane transporter activity"/>
    <property type="evidence" value="ECO:0000318"/>
    <property type="project" value="GO_Central"/>
</dbReference>
<dbReference type="GO" id="GO:0015193">
    <property type="term" value="F:L-proline transmembrane transporter activity"/>
    <property type="evidence" value="ECO:0000266"/>
    <property type="project" value="PomBase"/>
</dbReference>
<dbReference type="GO" id="GO:0003333">
    <property type="term" value="P:amino acid transmembrane transport"/>
    <property type="evidence" value="ECO:0000318"/>
    <property type="project" value="GO_Central"/>
</dbReference>
<dbReference type="GO" id="GO:1905647">
    <property type="term" value="P:proline import across plasma membrane"/>
    <property type="evidence" value="ECO:0000303"/>
    <property type="project" value="PomBase"/>
</dbReference>
<dbReference type="FunFam" id="1.20.1740.10:FF:000006">
    <property type="entry name" value="General amino acid permease"/>
    <property type="match status" value="1"/>
</dbReference>
<dbReference type="Gene3D" id="1.20.1740.10">
    <property type="entry name" value="Amino acid/polyamine transporter I"/>
    <property type="match status" value="1"/>
</dbReference>
<dbReference type="InterPro" id="IPR004841">
    <property type="entry name" value="AA-permease/SLC12A_dom"/>
</dbReference>
<dbReference type="InterPro" id="IPR004840">
    <property type="entry name" value="Amino_acid_permease_CS"/>
</dbReference>
<dbReference type="InterPro" id="IPR050524">
    <property type="entry name" value="APC_YAT"/>
</dbReference>
<dbReference type="PANTHER" id="PTHR43341">
    <property type="entry name" value="AMINO ACID PERMEASE"/>
    <property type="match status" value="1"/>
</dbReference>
<dbReference type="PANTHER" id="PTHR43341:SF36">
    <property type="entry name" value="PROLINE-SPECIFIC PERMEASE"/>
    <property type="match status" value="1"/>
</dbReference>
<dbReference type="Pfam" id="PF00324">
    <property type="entry name" value="AA_permease"/>
    <property type="match status" value="1"/>
</dbReference>
<dbReference type="PIRSF" id="PIRSF006060">
    <property type="entry name" value="AA_transporter"/>
    <property type="match status" value="1"/>
</dbReference>
<dbReference type="PROSITE" id="PS00218">
    <property type="entry name" value="AMINO_ACID_PERMEASE_1"/>
    <property type="match status" value="1"/>
</dbReference>
<comment type="function">
    <text evidence="1">Required for high-affinity proline transport. May be responsible for proline recognition and probably also for proline translocation across the plasma membrane. Also functions as a non-specific GABA permease. Can also transport alanine and glycine (By similarity).</text>
</comment>
<comment type="subcellular location">
    <subcellularLocation>
        <location evidence="3">Golgi apparatus</location>
    </subcellularLocation>
    <subcellularLocation>
        <location evidence="3">Endoplasmic reticulum</location>
    </subcellularLocation>
    <subcellularLocation>
        <location evidence="2">Membrane</location>
        <topology evidence="2">Multi-pass membrane protein</topology>
    </subcellularLocation>
</comment>
<comment type="similarity">
    <text evidence="2">Belongs to the amino acid-polyamine-organocation (APC) superfamily. YAT (TC 2.A.3.10) family.</text>
</comment>
<name>PUT4_SCHPO</name>
<accession>Q9URZ3</accession>